<evidence type="ECO:0000250" key="1"/>
<evidence type="ECO:0000255" key="2">
    <source>
        <dbReference type="PROSITE-ProRule" id="PRU00214"/>
    </source>
</evidence>
<evidence type="ECO:0000305" key="3"/>
<reference key="1">
    <citation type="submission" date="1993-12" db="EMBL/GenBank/DDBJ databases">
        <authorList>
            <person name="Frank S."/>
            <person name="Menzel D."/>
        </authorList>
    </citation>
    <scope>NUCLEOTIDE SEQUENCE [GENOMIC DNA]</scope>
</reference>
<keyword id="KW-0963">Cytoplasm</keyword>
<keyword id="KW-1017">Isopeptide bond</keyword>
<keyword id="KW-0539">Nucleus</keyword>
<keyword id="KW-0677">Repeat</keyword>
<keyword id="KW-0832">Ubl conjugation</keyword>
<organism>
    <name type="scientific">Acetabularia peniculus</name>
    <name type="common">Green alga</name>
    <name type="synonym">Polyphysa peniculus</name>
    <dbReference type="NCBI Taxonomy" id="35862"/>
    <lineage>
        <taxon>Eukaryota</taxon>
        <taxon>Viridiplantae</taxon>
        <taxon>Chlorophyta</taxon>
        <taxon>Ulvophyceae</taxon>
        <taxon>TCBD clade</taxon>
        <taxon>Dasycladales</taxon>
        <taxon>Polyphysaceae</taxon>
        <taxon>Acetabularia</taxon>
    </lineage>
</organism>
<feature type="chain" id="PRO_0000114830" description="Ubiquitin">
    <location>
        <begin position="1" status="less than"/>
        <end position="41"/>
    </location>
</feature>
<feature type="chain" id="PRO_0000396377" description="Ubiquitin-related 1">
    <location>
        <begin position="42"/>
        <end position="117"/>
    </location>
</feature>
<feature type="chain" id="PRO_0000396378" description="Ubiquitin">
    <location>
        <begin position="118"/>
        <end position="193"/>
    </location>
</feature>
<feature type="chain" id="PRO_0000396379" description="Ubiquitin">
    <location>
        <begin position="194"/>
        <end position="269"/>
    </location>
</feature>
<feature type="chain" id="PRO_0000396380" description="Ubiquitin">
    <location>
        <begin position="270"/>
        <end position="345"/>
    </location>
</feature>
<feature type="chain" id="PRO_0000396381" description="Ubiquitin-related 2">
    <location>
        <begin position="346"/>
        <end position="421"/>
    </location>
</feature>
<feature type="propeptide" id="PRO_0000396382">
    <location>
        <begin position="422"/>
        <end position="423"/>
    </location>
</feature>
<feature type="domain" description="Ubiquitin-like 1" evidence="2">
    <location>
        <begin position="1" status="less than"/>
        <end position="41"/>
    </location>
</feature>
<feature type="domain" description="Ubiquitin-like 2" evidence="2">
    <location>
        <begin position="42"/>
        <end position="117"/>
    </location>
</feature>
<feature type="domain" description="Ubiquitin-like 3" evidence="2">
    <location>
        <begin position="118"/>
        <end position="193"/>
    </location>
</feature>
<feature type="domain" description="Ubiquitin-like 4" evidence="2">
    <location>
        <begin position="194"/>
        <end position="269"/>
    </location>
</feature>
<feature type="domain" description="Ubiquitin-like 5" evidence="2">
    <location>
        <begin position="270"/>
        <end position="345"/>
    </location>
</feature>
<feature type="domain" description="Ubiquitin-like 6" evidence="2">
    <location>
        <begin position="346"/>
        <end position="421"/>
    </location>
</feature>
<feature type="cross-link" description="Glycyl lysine isopeptide (Lys-Gly) (interchain with G-Cter in ubiquitin)" evidence="1">
    <location>
        <position position="89"/>
    </location>
</feature>
<feature type="cross-link" description="Glycyl lysine isopeptide (Gly-Lys) (interchain with K-? in acceptor proteins)" evidence="2">
    <location>
        <position position="117"/>
    </location>
</feature>
<feature type="non-terminal residue">
    <location>
        <position position="1"/>
    </location>
</feature>
<comment type="function">
    <text evidence="1">Ubiquitin exists either covalently attached to another protein, or free (unanchored). When covalently bound, it is conjugated to target proteins via an isopeptide bond either as a monomer (monoubiquitin), a polymer linked via different Lys residues of the ubiquitin (polyubiquitin chains) or a linear polymer linked via the initiator Met of the ubiquitin (linear polyubiquitin chains). Polyubiquitin chains, when attached to a target protein, have different functions depending on the Lys residue of the ubiquitin that is linked: Lys-6-linked may be involved in DNA repair; Lys-11-linked is involved in ERAD (endoplasmic reticulum-associated degradation) and in cell-cycle regulation; Lys-29-linked is involved in lysosomal degradation; Lys-33-linked is involved in kinase modification; Lys-48-linked is involved in protein degradation via the proteasome; Lys-63-linked is involved in endocytosis, DNA-damage responses as well as in signaling processes leading to activation of the transcription factor NF-kappa-B. Linear polymer chains formed via attachment by the initiator Met lead to cell signaling. Ubiquitin is usually conjugated to Lys residues of target proteins, however, in rare cases, conjugation to Cys or Ser residues has been observed. When polyubiquitin is free (unanchored-polyubiquitin), it also has distinct roles, such as in activation of protein kinases, and in signaling (By similarity).</text>
</comment>
<comment type="subcellular location">
    <subcellularLocation>
        <location evidence="1">Cytoplasm</location>
    </subcellularLocation>
    <subcellularLocation>
        <location evidence="1">Nucleus</location>
    </subcellularLocation>
</comment>
<comment type="miscellaneous">
    <text>For the sake of clarity sequence features are annotated only for the first chain, and are not repeated for each of the following chains.</text>
</comment>
<comment type="similarity">
    <text evidence="3">Belongs to the ubiquitin family.</text>
</comment>
<protein>
    <recommendedName>
        <fullName>Polyubiquitin</fullName>
    </recommendedName>
    <component>
        <recommendedName>
            <fullName>Ubiquitin</fullName>
        </recommendedName>
    </component>
    <component>
        <recommendedName>
            <fullName>Ubiquitin-related 1</fullName>
        </recommendedName>
    </component>
    <component>
        <recommendedName>
            <fullName>Ubiquitin-related 2</fullName>
        </recommendedName>
    </component>
</protein>
<proteinExistence type="inferred from homology"/>
<dbReference type="EMBL" id="Z28649">
    <property type="protein sequence ID" value="CAA82268.1"/>
    <property type="molecule type" value="Genomic_DNA"/>
</dbReference>
<dbReference type="SMR" id="P42739"/>
<dbReference type="GO" id="GO:0005737">
    <property type="term" value="C:cytoplasm"/>
    <property type="evidence" value="ECO:0007669"/>
    <property type="project" value="UniProtKB-SubCell"/>
</dbReference>
<dbReference type="GO" id="GO:0005634">
    <property type="term" value="C:nucleus"/>
    <property type="evidence" value="ECO:0007669"/>
    <property type="project" value="UniProtKB-SubCell"/>
</dbReference>
<dbReference type="GO" id="GO:0003729">
    <property type="term" value="F:mRNA binding"/>
    <property type="evidence" value="ECO:0007669"/>
    <property type="project" value="UniProtKB-ARBA"/>
</dbReference>
<dbReference type="CDD" id="cd01803">
    <property type="entry name" value="Ubl_ubiquitin"/>
    <property type="match status" value="5"/>
</dbReference>
<dbReference type="FunFam" id="3.10.20.90:FF:000016">
    <property type="entry name" value="Polyubiquitin 3"/>
    <property type="match status" value="1"/>
</dbReference>
<dbReference type="FunFam" id="3.10.20.90:FF:000011">
    <property type="entry name" value="Polyubiquitin Ubiquitin"/>
    <property type="match status" value="1"/>
</dbReference>
<dbReference type="FunFam" id="3.10.20.90:FF:000014">
    <property type="entry name" value="Ubiquitin-60S ribosomal L40 fusion"/>
    <property type="match status" value="3"/>
</dbReference>
<dbReference type="Gene3D" id="3.10.20.90">
    <property type="entry name" value="Phosphatidylinositol 3-kinase Catalytic Subunit, Chain A, domain 1"/>
    <property type="match status" value="6"/>
</dbReference>
<dbReference type="InterPro" id="IPR000626">
    <property type="entry name" value="Ubiquitin-like_dom"/>
</dbReference>
<dbReference type="InterPro" id="IPR029071">
    <property type="entry name" value="Ubiquitin-like_domsf"/>
</dbReference>
<dbReference type="InterPro" id="IPR019954">
    <property type="entry name" value="Ubiquitin_CS"/>
</dbReference>
<dbReference type="InterPro" id="IPR019956">
    <property type="entry name" value="Ubiquitin_dom"/>
</dbReference>
<dbReference type="InterPro" id="IPR050158">
    <property type="entry name" value="Ubiquitin_ubiquitin-like"/>
</dbReference>
<dbReference type="PANTHER" id="PTHR10666">
    <property type="entry name" value="UBIQUITIN"/>
    <property type="match status" value="1"/>
</dbReference>
<dbReference type="Pfam" id="PF00240">
    <property type="entry name" value="ubiquitin"/>
    <property type="match status" value="6"/>
</dbReference>
<dbReference type="PRINTS" id="PR00348">
    <property type="entry name" value="UBIQUITIN"/>
</dbReference>
<dbReference type="SMART" id="SM00213">
    <property type="entry name" value="UBQ"/>
    <property type="match status" value="6"/>
</dbReference>
<dbReference type="SUPFAM" id="SSF54236">
    <property type="entry name" value="Ubiquitin-like"/>
    <property type="match status" value="6"/>
</dbReference>
<dbReference type="PROSITE" id="PS00299">
    <property type="entry name" value="UBIQUITIN_1"/>
    <property type="match status" value="5"/>
</dbReference>
<dbReference type="PROSITE" id="PS50053">
    <property type="entry name" value="UBIQUITIN_2"/>
    <property type="match status" value="6"/>
</dbReference>
<accession>P42739</accession>
<name>UBIQP_ACEPE</name>
<sequence length="423" mass="47449">IPPDQQRLIFAGKQLEDGRTLADYNIQKESTLHLVLRLRGGMQIFVKTLTGKTITLEVQSSDTVENVKSKIQDKEGIPPDQQRLIFAGKQLEDGLTLADYNIQKESTLHLVLRLRGGMQIFVKTLTGKTITLEVESSDTVENVKSKIQDKEGIPPDQQRLIFAGKQLEDGRTLADYNIQKESTLHLVLRLRGGMQIFVKTLTGKTITLEVESSDTVENVKSKIQDKEGIPPDQQRLIFAGKQLEDGRTLADYNIQKESTLHLVLRLRGGMQIFVKTLTGKTITLEVESSDTVENVKSKIQDKEGIPPDQQRLIFAGKQLEDGRTLADYNIQKESTLHLVLRLRGGMQIFVKTLTGKTITLEVESSDTVENVKSKIQDKEGIPPDQQRIIFAGKQLEDGRTLADYNIQKESTLHLVLRLRGGAF</sequence>